<sequence length="79" mass="8623">MSDIAERVKKIVVEHLGVEPEKVVESANFIDDLGADSLDTVELVMAFEEEFNVEIPDDAAETIQTVGDAVKFLEKNSAA</sequence>
<organism>
    <name type="scientific">Methylobacterium radiotolerans (strain ATCC 27329 / DSM 1819 / JCM 2831 / NBRC 15690 / NCIMB 10815 / 0-1)</name>
    <dbReference type="NCBI Taxonomy" id="426355"/>
    <lineage>
        <taxon>Bacteria</taxon>
        <taxon>Pseudomonadati</taxon>
        <taxon>Pseudomonadota</taxon>
        <taxon>Alphaproteobacteria</taxon>
        <taxon>Hyphomicrobiales</taxon>
        <taxon>Methylobacteriaceae</taxon>
        <taxon>Methylobacterium</taxon>
    </lineage>
</organism>
<protein>
    <recommendedName>
        <fullName evidence="1">Acyl carrier protein</fullName>
        <shortName evidence="1">ACP</shortName>
    </recommendedName>
</protein>
<dbReference type="EMBL" id="CP001001">
    <property type="protein sequence ID" value="ACB23893.1"/>
    <property type="molecule type" value="Genomic_DNA"/>
</dbReference>
<dbReference type="RefSeq" id="WP_007559070.1">
    <property type="nucleotide sequence ID" value="NC_010505.1"/>
</dbReference>
<dbReference type="SMR" id="B1LTE7"/>
<dbReference type="STRING" id="426355.Mrad2831_1898"/>
<dbReference type="KEGG" id="mrd:Mrad2831_1898"/>
<dbReference type="eggNOG" id="COG0236">
    <property type="taxonomic scope" value="Bacteria"/>
</dbReference>
<dbReference type="HOGENOM" id="CLU_108696_5_1_5"/>
<dbReference type="OrthoDB" id="9804551at2"/>
<dbReference type="UniPathway" id="UPA00094"/>
<dbReference type="Proteomes" id="UP000006589">
    <property type="component" value="Chromosome"/>
</dbReference>
<dbReference type="GO" id="GO:0005829">
    <property type="term" value="C:cytosol"/>
    <property type="evidence" value="ECO:0007669"/>
    <property type="project" value="TreeGrafter"/>
</dbReference>
<dbReference type="GO" id="GO:0016020">
    <property type="term" value="C:membrane"/>
    <property type="evidence" value="ECO:0007669"/>
    <property type="project" value="GOC"/>
</dbReference>
<dbReference type="GO" id="GO:0000035">
    <property type="term" value="F:acyl binding"/>
    <property type="evidence" value="ECO:0007669"/>
    <property type="project" value="TreeGrafter"/>
</dbReference>
<dbReference type="GO" id="GO:0000036">
    <property type="term" value="F:acyl carrier activity"/>
    <property type="evidence" value="ECO:0007669"/>
    <property type="project" value="UniProtKB-UniRule"/>
</dbReference>
<dbReference type="GO" id="GO:0031177">
    <property type="term" value="F:phosphopantetheine binding"/>
    <property type="evidence" value="ECO:0007669"/>
    <property type="project" value="InterPro"/>
</dbReference>
<dbReference type="GO" id="GO:0009245">
    <property type="term" value="P:lipid A biosynthetic process"/>
    <property type="evidence" value="ECO:0007669"/>
    <property type="project" value="TreeGrafter"/>
</dbReference>
<dbReference type="FunFam" id="1.10.1200.10:FF:000001">
    <property type="entry name" value="Acyl carrier protein"/>
    <property type="match status" value="1"/>
</dbReference>
<dbReference type="Gene3D" id="1.10.1200.10">
    <property type="entry name" value="ACP-like"/>
    <property type="match status" value="1"/>
</dbReference>
<dbReference type="HAMAP" id="MF_01217">
    <property type="entry name" value="Acyl_carrier"/>
    <property type="match status" value="1"/>
</dbReference>
<dbReference type="InterPro" id="IPR003231">
    <property type="entry name" value="ACP"/>
</dbReference>
<dbReference type="InterPro" id="IPR036736">
    <property type="entry name" value="ACP-like_sf"/>
</dbReference>
<dbReference type="InterPro" id="IPR020806">
    <property type="entry name" value="PKS_PP-bd"/>
</dbReference>
<dbReference type="InterPro" id="IPR009081">
    <property type="entry name" value="PP-bd_ACP"/>
</dbReference>
<dbReference type="InterPro" id="IPR006162">
    <property type="entry name" value="Ppantetheine_attach_site"/>
</dbReference>
<dbReference type="NCBIfam" id="TIGR00517">
    <property type="entry name" value="acyl_carrier"/>
    <property type="match status" value="1"/>
</dbReference>
<dbReference type="NCBIfam" id="NF002148">
    <property type="entry name" value="PRK00982.1-2"/>
    <property type="match status" value="1"/>
</dbReference>
<dbReference type="NCBIfam" id="NF002149">
    <property type="entry name" value="PRK00982.1-3"/>
    <property type="match status" value="1"/>
</dbReference>
<dbReference type="NCBIfam" id="NF002150">
    <property type="entry name" value="PRK00982.1-4"/>
    <property type="match status" value="1"/>
</dbReference>
<dbReference type="NCBIfam" id="NF002151">
    <property type="entry name" value="PRK00982.1-5"/>
    <property type="match status" value="1"/>
</dbReference>
<dbReference type="PANTHER" id="PTHR20863">
    <property type="entry name" value="ACYL CARRIER PROTEIN"/>
    <property type="match status" value="1"/>
</dbReference>
<dbReference type="PANTHER" id="PTHR20863:SF76">
    <property type="entry name" value="CARRIER DOMAIN-CONTAINING PROTEIN"/>
    <property type="match status" value="1"/>
</dbReference>
<dbReference type="Pfam" id="PF00550">
    <property type="entry name" value="PP-binding"/>
    <property type="match status" value="1"/>
</dbReference>
<dbReference type="SMART" id="SM00823">
    <property type="entry name" value="PKS_PP"/>
    <property type="match status" value="1"/>
</dbReference>
<dbReference type="SUPFAM" id="SSF47336">
    <property type="entry name" value="ACP-like"/>
    <property type="match status" value="1"/>
</dbReference>
<dbReference type="PROSITE" id="PS50075">
    <property type="entry name" value="CARRIER"/>
    <property type="match status" value="1"/>
</dbReference>
<dbReference type="PROSITE" id="PS00012">
    <property type="entry name" value="PHOSPHOPANTETHEINE"/>
    <property type="match status" value="1"/>
</dbReference>
<name>ACP_METRJ</name>
<comment type="function">
    <text evidence="1">Carrier of the growing fatty acid chain in fatty acid biosynthesis.</text>
</comment>
<comment type="pathway">
    <text evidence="1">Lipid metabolism; fatty acid biosynthesis.</text>
</comment>
<comment type="subcellular location">
    <subcellularLocation>
        <location evidence="1">Cytoplasm</location>
    </subcellularLocation>
</comment>
<comment type="PTM">
    <text evidence="1">4'-phosphopantetheine is transferred from CoA to a specific serine of apo-ACP by AcpS. This modification is essential for activity because fatty acids are bound in thioester linkage to the sulfhydryl of the prosthetic group.</text>
</comment>
<comment type="similarity">
    <text evidence="1">Belongs to the acyl carrier protein (ACP) family.</text>
</comment>
<feature type="chain" id="PRO_1000139043" description="Acyl carrier protein">
    <location>
        <begin position="1"/>
        <end position="79"/>
    </location>
</feature>
<feature type="domain" description="Carrier" evidence="2">
    <location>
        <begin position="2"/>
        <end position="77"/>
    </location>
</feature>
<feature type="modified residue" description="O-(pantetheine 4'-phosphoryl)serine" evidence="2">
    <location>
        <position position="37"/>
    </location>
</feature>
<accession>B1LTE7</accession>
<proteinExistence type="inferred from homology"/>
<evidence type="ECO:0000255" key="1">
    <source>
        <dbReference type="HAMAP-Rule" id="MF_01217"/>
    </source>
</evidence>
<evidence type="ECO:0000255" key="2">
    <source>
        <dbReference type="PROSITE-ProRule" id="PRU00258"/>
    </source>
</evidence>
<gene>
    <name evidence="1" type="primary">acpP</name>
    <name type="ordered locus">Mrad2831_1898</name>
</gene>
<keyword id="KW-0963">Cytoplasm</keyword>
<keyword id="KW-0275">Fatty acid biosynthesis</keyword>
<keyword id="KW-0276">Fatty acid metabolism</keyword>
<keyword id="KW-0444">Lipid biosynthesis</keyword>
<keyword id="KW-0443">Lipid metabolism</keyword>
<keyword id="KW-0596">Phosphopantetheine</keyword>
<keyword id="KW-0597">Phosphoprotein</keyword>
<reference key="1">
    <citation type="submission" date="2008-03" db="EMBL/GenBank/DDBJ databases">
        <title>Complete sequence of chromosome of Methylobacterium radiotolerans JCM 2831.</title>
        <authorList>
            <consortium name="US DOE Joint Genome Institute"/>
            <person name="Copeland A."/>
            <person name="Lucas S."/>
            <person name="Lapidus A."/>
            <person name="Glavina del Rio T."/>
            <person name="Dalin E."/>
            <person name="Tice H."/>
            <person name="Bruce D."/>
            <person name="Goodwin L."/>
            <person name="Pitluck S."/>
            <person name="Kiss H."/>
            <person name="Brettin T."/>
            <person name="Detter J.C."/>
            <person name="Han C."/>
            <person name="Kuske C.R."/>
            <person name="Schmutz J."/>
            <person name="Larimer F."/>
            <person name="Land M."/>
            <person name="Hauser L."/>
            <person name="Kyrpides N."/>
            <person name="Mikhailova N."/>
            <person name="Marx C.J."/>
            <person name="Richardson P."/>
        </authorList>
    </citation>
    <scope>NUCLEOTIDE SEQUENCE [LARGE SCALE GENOMIC DNA]</scope>
    <source>
        <strain>ATCC 27329 / DSM 1819 / JCM 2831 / NBRC 15690 / NCIMB 10815 / 0-1</strain>
    </source>
</reference>